<reference key="1">
    <citation type="journal article" date="2005" name="BMC Biol.">
        <title>The complete chloroplast DNA sequences of the charophycean green algae Staurastrum and Zygnema reveal that the chloroplast genome underwent extensive changes during the evolution of the Zygnematales.</title>
        <authorList>
            <person name="Turmel M."/>
            <person name="Otis C."/>
            <person name="Lemieux C."/>
        </authorList>
    </citation>
    <scope>NUCLEOTIDE SEQUENCE [LARGE SCALE GENOMIC DNA]</scope>
</reference>
<keyword id="KW-0007">Acetylation</keyword>
<keyword id="KW-0113">Calvin cycle</keyword>
<keyword id="KW-0120">Carbon dioxide fixation</keyword>
<keyword id="KW-0150">Chloroplast</keyword>
<keyword id="KW-1015">Disulfide bond</keyword>
<keyword id="KW-0456">Lyase</keyword>
<keyword id="KW-0460">Magnesium</keyword>
<keyword id="KW-0479">Metal-binding</keyword>
<keyword id="KW-0488">Methylation</keyword>
<keyword id="KW-0503">Monooxygenase</keyword>
<keyword id="KW-0560">Oxidoreductase</keyword>
<keyword id="KW-0601">Photorespiration</keyword>
<keyword id="KW-0602">Photosynthesis</keyword>
<keyword id="KW-0934">Plastid</keyword>
<gene>
    <name evidence="1" type="primary">rbcL</name>
</gene>
<organism>
    <name type="scientific">Staurastrum punctulatum</name>
    <name type="common">Green alga</name>
    <name type="synonym">Cosmoastrum punctulatum</name>
    <dbReference type="NCBI Taxonomy" id="102822"/>
    <lineage>
        <taxon>Eukaryota</taxon>
        <taxon>Viridiplantae</taxon>
        <taxon>Streptophyta</taxon>
        <taxon>Zygnematophyceae</taxon>
        <taxon>Zygnematophycidae</taxon>
        <taxon>Desmidiales</taxon>
        <taxon>Desmidiaceae</taxon>
        <taxon>Staurastrum</taxon>
    </lineage>
</organism>
<accession>Q32RY7</accession>
<evidence type="ECO:0000255" key="1">
    <source>
        <dbReference type="HAMAP-Rule" id="MF_01338"/>
    </source>
</evidence>
<protein>
    <recommendedName>
        <fullName evidence="1">Ribulose bisphosphate carboxylase large chain</fullName>
        <shortName evidence="1">RuBisCO large subunit</shortName>
        <ecNumber evidence="1">4.1.1.39</ecNumber>
    </recommendedName>
</protein>
<proteinExistence type="inferred from homology"/>
<comment type="function">
    <text evidence="1">RuBisCO catalyzes two reactions: the carboxylation of D-ribulose 1,5-bisphosphate, the primary event in carbon dioxide fixation, as well as the oxidative fragmentation of the pentose substrate in the photorespiration process. Both reactions occur simultaneously and in competition at the same active site.</text>
</comment>
<comment type="catalytic activity">
    <reaction evidence="1">
        <text>2 (2R)-3-phosphoglycerate + 2 H(+) = D-ribulose 1,5-bisphosphate + CO2 + H2O</text>
        <dbReference type="Rhea" id="RHEA:23124"/>
        <dbReference type="ChEBI" id="CHEBI:15377"/>
        <dbReference type="ChEBI" id="CHEBI:15378"/>
        <dbReference type="ChEBI" id="CHEBI:16526"/>
        <dbReference type="ChEBI" id="CHEBI:57870"/>
        <dbReference type="ChEBI" id="CHEBI:58272"/>
        <dbReference type="EC" id="4.1.1.39"/>
    </reaction>
</comment>
<comment type="catalytic activity">
    <reaction evidence="1">
        <text>D-ribulose 1,5-bisphosphate + O2 = 2-phosphoglycolate + (2R)-3-phosphoglycerate + 2 H(+)</text>
        <dbReference type="Rhea" id="RHEA:36631"/>
        <dbReference type="ChEBI" id="CHEBI:15378"/>
        <dbReference type="ChEBI" id="CHEBI:15379"/>
        <dbReference type="ChEBI" id="CHEBI:57870"/>
        <dbReference type="ChEBI" id="CHEBI:58033"/>
        <dbReference type="ChEBI" id="CHEBI:58272"/>
    </reaction>
</comment>
<comment type="cofactor">
    <cofactor evidence="1">
        <name>Mg(2+)</name>
        <dbReference type="ChEBI" id="CHEBI:18420"/>
    </cofactor>
    <text evidence="1">Binds 1 Mg(2+) ion per subunit.</text>
</comment>
<comment type="subunit">
    <text evidence="1">Heterohexadecamer of 8 large chains and 8 small chains; disulfide-linked. The disulfide link is formed within the large subunit homodimers.</text>
</comment>
<comment type="subcellular location">
    <subcellularLocation>
        <location>Plastid</location>
        <location>Chloroplast</location>
    </subcellularLocation>
</comment>
<comment type="PTM">
    <text evidence="1">The disulfide bond which can form in the large chain dimeric partners within the hexadecamer appears to be associated with oxidative stress and protein turnover.</text>
</comment>
<comment type="miscellaneous">
    <text evidence="1">The basic functional RuBisCO is composed of a large chain homodimer in a 'head-to-tail' conformation. In form I RuBisCO this homodimer is arranged in a barrel-like tetramer with the small subunits forming a tetrameric 'cap' on each end of the 'barrel'.</text>
</comment>
<comment type="similarity">
    <text evidence="1">Belongs to the RuBisCO large chain family. Type I subfamily.</text>
</comment>
<sequence length="475" mass="52566">MSPQTETKAGAGFKAGVKDYRLTYYTPDYETKETDVLAAFRMTPQPGVPPEEAGAAVAAESSTGTWTTVWTDGLTSLDRYKGRCYDIEPVPGEENQYIAYVAYPLDLFEEGSVTNLFTSIVGNVFGFKALRALRLEDLRIPAAYAKTFQGPPHGIQVERDKLNKYGRPLLGCTIKPKLGLSAKNYGRAVYECLRGGLDFTKDDENVTSQPFMRWRDRFLFVAEATFKAQAETGEIKGHYLNATAGTCEEMMKRAAYARELGVPIIMHDYLTGGFTANTSLSNYCRDNGLLLHIHRAMHAVIDRQKNHGIHFRVLAKALRMSGGDHIHTGTVVGKLEGERQVTLGFVDLLRDDYIEKDRSRGIYFTQDWVALPGVLPVASGGIHVWHMPALTEIFGDDSVLQFGGGTLGHPWGNAPGAVANRVALEACVQARNEGRDLARQGNDIIREAAKWSPELAAACEVWKEIKFEFDTIDTL</sequence>
<geneLocation type="chloroplast"/>
<dbReference type="EC" id="4.1.1.39" evidence="1"/>
<dbReference type="EMBL" id="AY958085">
    <property type="protein sequence ID" value="AAX45736.1"/>
    <property type="molecule type" value="Genomic_DNA"/>
</dbReference>
<dbReference type="RefSeq" id="YP_636389.1">
    <property type="nucleotide sequence ID" value="NC_008116.1"/>
</dbReference>
<dbReference type="SMR" id="Q32RY7"/>
<dbReference type="GeneID" id="4108599"/>
<dbReference type="GO" id="GO:0009507">
    <property type="term" value="C:chloroplast"/>
    <property type="evidence" value="ECO:0007669"/>
    <property type="project" value="UniProtKB-SubCell"/>
</dbReference>
<dbReference type="GO" id="GO:0000287">
    <property type="term" value="F:magnesium ion binding"/>
    <property type="evidence" value="ECO:0007669"/>
    <property type="project" value="UniProtKB-UniRule"/>
</dbReference>
<dbReference type="GO" id="GO:0004497">
    <property type="term" value="F:monooxygenase activity"/>
    <property type="evidence" value="ECO:0007669"/>
    <property type="project" value="UniProtKB-KW"/>
</dbReference>
<dbReference type="GO" id="GO:0016984">
    <property type="term" value="F:ribulose-bisphosphate carboxylase activity"/>
    <property type="evidence" value="ECO:0007669"/>
    <property type="project" value="UniProtKB-UniRule"/>
</dbReference>
<dbReference type="GO" id="GO:0009853">
    <property type="term" value="P:photorespiration"/>
    <property type="evidence" value="ECO:0007669"/>
    <property type="project" value="UniProtKB-KW"/>
</dbReference>
<dbReference type="GO" id="GO:0019253">
    <property type="term" value="P:reductive pentose-phosphate cycle"/>
    <property type="evidence" value="ECO:0007669"/>
    <property type="project" value="UniProtKB-UniRule"/>
</dbReference>
<dbReference type="CDD" id="cd08212">
    <property type="entry name" value="RuBisCO_large_I"/>
    <property type="match status" value="1"/>
</dbReference>
<dbReference type="FunFam" id="3.20.20.110:FF:000001">
    <property type="entry name" value="Ribulose bisphosphate carboxylase large chain"/>
    <property type="match status" value="1"/>
</dbReference>
<dbReference type="FunFam" id="3.30.70.150:FF:000001">
    <property type="entry name" value="Ribulose bisphosphate carboxylase large chain"/>
    <property type="match status" value="1"/>
</dbReference>
<dbReference type="Gene3D" id="3.20.20.110">
    <property type="entry name" value="Ribulose bisphosphate carboxylase, large subunit, C-terminal domain"/>
    <property type="match status" value="1"/>
</dbReference>
<dbReference type="Gene3D" id="3.30.70.150">
    <property type="entry name" value="RuBisCO large subunit, N-terminal domain"/>
    <property type="match status" value="1"/>
</dbReference>
<dbReference type="HAMAP" id="MF_01338">
    <property type="entry name" value="RuBisCO_L_type1"/>
    <property type="match status" value="1"/>
</dbReference>
<dbReference type="InterPro" id="IPR033966">
    <property type="entry name" value="RuBisCO"/>
</dbReference>
<dbReference type="InterPro" id="IPR020878">
    <property type="entry name" value="RuBisCo_large_chain_AS"/>
</dbReference>
<dbReference type="InterPro" id="IPR000685">
    <property type="entry name" value="RuBisCO_lsu_C"/>
</dbReference>
<dbReference type="InterPro" id="IPR036376">
    <property type="entry name" value="RuBisCO_lsu_C_sf"/>
</dbReference>
<dbReference type="InterPro" id="IPR017443">
    <property type="entry name" value="RuBisCO_lsu_fd_N"/>
</dbReference>
<dbReference type="InterPro" id="IPR036422">
    <property type="entry name" value="RuBisCO_lsu_N_sf"/>
</dbReference>
<dbReference type="InterPro" id="IPR020888">
    <property type="entry name" value="RuBisCO_lsuI"/>
</dbReference>
<dbReference type="NCBIfam" id="NF003252">
    <property type="entry name" value="PRK04208.1"/>
    <property type="match status" value="1"/>
</dbReference>
<dbReference type="PANTHER" id="PTHR42704">
    <property type="entry name" value="RIBULOSE BISPHOSPHATE CARBOXYLASE"/>
    <property type="match status" value="1"/>
</dbReference>
<dbReference type="PANTHER" id="PTHR42704:SF17">
    <property type="entry name" value="RIBULOSE BISPHOSPHATE CARBOXYLASE LARGE CHAIN"/>
    <property type="match status" value="1"/>
</dbReference>
<dbReference type="Pfam" id="PF00016">
    <property type="entry name" value="RuBisCO_large"/>
    <property type="match status" value="1"/>
</dbReference>
<dbReference type="Pfam" id="PF02788">
    <property type="entry name" value="RuBisCO_large_N"/>
    <property type="match status" value="1"/>
</dbReference>
<dbReference type="SFLD" id="SFLDG01052">
    <property type="entry name" value="RuBisCO"/>
    <property type="match status" value="1"/>
</dbReference>
<dbReference type="SFLD" id="SFLDS00014">
    <property type="entry name" value="RuBisCO"/>
    <property type="match status" value="1"/>
</dbReference>
<dbReference type="SFLD" id="SFLDG00301">
    <property type="entry name" value="RuBisCO-like_proteins"/>
    <property type="match status" value="1"/>
</dbReference>
<dbReference type="SUPFAM" id="SSF51649">
    <property type="entry name" value="RuBisCo, C-terminal domain"/>
    <property type="match status" value="1"/>
</dbReference>
<dbReference type="SUPFAM" id="SSF54966">
    <property type="entry name" value="RuBisCO, large subunit, small (N-terminal) domain"/>
    <property type="match status" value="1"/>
</dbReference>
<dbReference type="PROSITE" id="PS00157">
    <property type="entry name" value="RUBISCO_LARGE"/>
    <property type="match status" value="1"/>
</dbReference>
<name>RBL_STAPU</name>
<feature type="propeptide" id="PRO_0000251440" evidence="1">
    <location>
        <begin position="1"/>
        <end position="2"/>
    </location>
</feature>
<feature type="chain" id="PRO_0000251441" description="Ribulose bisphosphate carboxylase large chain">
    <location>
        <begin position="3"/>
        <end position="475"/>
    </location>
</feature>
<feature type="active site" description="Proton acceptor" evidence="1">
    <location>
        <position position="175"/>
    </location>
</feature>
<feature type="active site" description="Proton acceptor" evidence="1">
    <location>
        <position position="294"/>
    </location>
</feature>
<feature type="binding site" description="in homodimeric partner" evidence="1">
    <location>
        <position position="123"/>
    </location>
    <ligand>
        <name>substrate</name>
    </ligand>
</feature>
<feature type="binding site" evidence="1">
    <location>
        <position position="173"/>
    </location>
    <ligand>
        <name>substrate</name>
    </ligand>
</feature>
<feature type="binding site" evidence="1">
    <location>
        <position position="177"/>
    </location>
    <ligand>
        <name>substrate</name>
    </ligand>
</feature>
<feature type="binding site" description="via carbamate group" evidence="1">
    <location>
        <position position="201"/>
    </location>
    <ligand>
        <name>Mg(2+)</name>
        <dbReference type="ChEBI" id="CHEBI:18420"/>
    </ligand>
</feature>
<feature type="binding site" evidence="1">
    <location>
        <position position="203"/>
    </location>
    <ligand>
        <name>Mg(2+)</name>
        <dbReference type="ChEBI" id="CHEBI:18420"/>
    </ligand>
</feature>
<feature type="binding site" evidence="1">
    <location>
        <position position="204"/>
    </location>
    <ligand>
        <name>Mg(2+)</name>
        <dbReference type="ChEBI" id="CHEBI:18420"/>
    </ligand>
</feature>
<feature type="binding site" evidence="1">
    <location>
        <position position="295"/>
    </location>
    <ligand>
        <name>substrate</name>
    </ligand>
</feature>
<feature type="binding site" evidence="1">
    <location>
        <position position="327"/>
    </location>
    <ligand>
        <name>substrate</name>
    </ligand>
</feature>
<feature type="binding site" evidence="1">
    <location>
        <position position="379"/>
    </location>
    <ligand>
        <name>substrate</name>
    </ligand>
</feature>
<feature type="site" description="Transition state stabilizer" evidence="1">
    <location>
        <position position="334"/>
    </location>
</feature>
<feature type="modified residue" description="N-acetylproline" evidence="1">
    <location>
        <position position="3"/>
    </location>
</feature>
<feature type="modified residue" description="N6,N6,N6-trimethyllysine" evidence="1">
    <location>
        <position position="14"/>
    </location>
</feature>
<feature type="modified residue" description="N6-carboxylysine" evidence="1">
    <location>
        <position position="201"/>
    </location>
</feature>
<feature type="disulfide bond" description="Interchain; in linked form" evidence="1">
    <location>
        <position position="247"/>
    </location>
</feature>